<name>NAH3_METJA</name>
<proteinExistence type="inferred from homology"/>
<accession>Q58671</accession>
<evidence type="ECO:0000255" key="1"/>
<evidence type="ECO:0000305" key="2"/>
<dbReference type="EMBL" id="L77117">
    <property type="protein sequence ID" value="AAB99281.1"/>
    <property type="molecule type" value="Genomic_DNA"/>
</dbReference>
<dbReference type="PIR" id="B64459">
    <property type="entry name" value="B64459"/>
</dbReference>
<dbReference type="RefSeq" id="WP_010870788.1">
    <property type="nucleotide sequence ID" value="NC_000909.1"/>
</dbReference>
<dbReference type="SMR" id="Q58671"/>
<dbReference type="FunCoup" id="Q58671">
    <property type="interactions" value="117"/>
</dbReference>
<dbReference type="STRING" id="243232.MJ_1275"/>
<dbReference type="PaxDb" id="243232-MJ_1275"/>
<dbReference type="EnsemblBacteria" id="AAB99281">
    <property type="protein sequence ID" value="AAB99281"/>
    <property type="gene ID" value="MJ_1275"/>
</dbReference>
<dbReference type="GeneID" id="1452173"/>
<dbReference type="KEGG" id="mja:MJ_1275"/>
<dbReference type="eggNOG" id="arCOG01953">
    <property type="taxonomic scope" value="Archaea"/>
</dbReference>
<dbReference type="HOGENOM" id="CLU_005126_7_1_2"/>
<dbReference type="InParanoid" id="Q58671"/>
<dbReference type="OrthoDB" id="12029at2157"/>
<dbReference type="PhylomeDB" id="Q58671"/>
<dbReference type="Proteomes" id="UP000000805">
    <property type="component" value="Chromosome"/>
</dbReference>
<dbReference type="GO" id="GO:0005886">
    <property type="term" value="C:plasma membrane"/>
    <property type="evidence" value="ECO:0007669"/>
    <property type="project" value="UniProtKB-SubCell"/>
</dbReference>
<dbReference type="GO" id="GO:0015297">
    <property type="term" value="F:antiporter activity"/>
    <property type="evidence" value="ECO:0007669"/>
    <property type="project" value="UniProtKB-KW"/>
</dbReference>
<dbReference type="GO" id="GO:1902600">
    <property type="term" value="P:proton transmembrane transport"/>
    <property type="evidence" value="ECO:0007669"/>
    <property type="project" value="InterPro"/>
</dbReference>
<dbReference type="GO" id="GO:0006814">
    <property type="term" value="P:sodium ion transport"/>
    <property type="evidence" value="ECO:0007669"/>
    <property type="project" value="UniProtKB-KW"/>
</dbReference>
<dbReference type="Gene3D" id="1.20.1530.20">
    <property type="match status" value="1"/>
</dbReference>
<dbReference type="InterPro" id="IPR006153">
    <property type="entry name" value="Cation/H_exchanger_TM"/>
</dbReference>
<dbReference type="InterPro" id="IPR038770">
    <property type="entry name" value="Na+/solute_symporter_sf"/>
</dbReference>
<dbReference type="PANTHER" id="PTHR43562">
    <property type="entry name" value="NAPA-TYPE SODIUM/HYDROGEN ANTIPORTER"/>
    <property type="match status" value="1"/>
</dbReference>
<dbReference type="PANTHER" id="PTHR43562:SF3">
    <property type="entry name" value="SODIUM ION_PROTON EXCHANGER (EUROFUNG)"/>
    <property type="match status" value="1"/>
</dbReference>
<dbReference type="Pfam" id="PF00999">
    <property type="entry name" value="Na_H_Exchanger"/>
    <property type="match status" value="1"/>
</dbReference>
<gene>
    <name type="ordered locus">MJ1275</name>
</gene>
<comment type="function">
    <text>This is probably a Na(+)/H(+) antiporter.</text>
</comment>
<comment type="subcellular location">
    <subcellularLocation>
        <location evidence="2">Cell membrane</location>
        <topology evidence="2">Multi-pass membrane protein</topology>
    </subcellularLocation>
</comment>
<comment type="similarity">
    <text evidence="2">Belongs to the monovalent cation:proton antiporter 1 (CPA1) transporter (TC 2.A.36) family.</text>
</comment>
<sequence length="388" mass="42180">MESYYYVFFIILSIIFIVPNLLKKFNIPAITSIMIAGIIIGPYGLNILQVDETLKILADFGAIMLMFLAGLEVDNETLKQEFKNSLILSLFSLLIPGVGGYLIGQYLGLGFIGSLLYAVIFASHSVAIVYAILEELKMVKTRLGTIILSATIIVDLFTLLLLSVVIKLGIGGENVGTFLLETVLYIGVLLLAIPSLSKNILGVFEKLHAQRIHYVLFIIFIAIIVGEVIGIHPIVGAFICGVAVSEALTKEEHDELLNKNLNAIGYGFFIPIFFLVLGMETNIRVIFNLSNLELLLITLISAVALKFISGFIALRILGFDRIKNTIGGLLTVPKISASLVAASIGRELGLIGNEIFVTIVALSVITATITPIVVKHIFVAKCNKKAKN</sequence>
<feature type="chain" id="PRO_0000052404" description="Probable Na(+)/H(+) antiporter 3">
    <location>
        <begin position="1"/>
        <end position="388"/>
    </location>
</feature>
<feature type="transmembrane region" description="Helical" evidence="1">
    <location>
        <begin position="2"/>
        <end position="22"/>
    </location>
</feature>
<feature type="transmembrane region" description="Helical" evidence="1">
    <location>
        <begin position="27"/>
        <end position="47"/>
    </location>
</feature>
<feature type="transmembrane region" description="Helical" evidence="1">
    <location>
        <begin position="53"/>
        <end position="73"/>
    </location>
</feature>
<feature type="transmembrane region" description="Helical" evidence="1">
    <location>
        <begin position="81"/>
        <end position="101"/>
    </location>
</feature>
<feature type="transmembrane region" description="Helical" evidence="1">
    <location>
        <begin position="102"/>
        <end position="122"/>
    </location>
</feature>
<feature type="transmembrane region" description="Helical" evidence="1">
    <location>
        <begin position="146"/>
        <end position="166"/>
    </location>
</feature>
<feature type="transmembrane region" description="Helical" evidence="1">
    <location>
        <begin position="175"/>
        <end position="195"/>
    </location>
</feature>
<feature type="transmembrane region" description="Helical" evidence="1">
    <location>
        <begin position="215"/>
        <end position="235"/>
    </location>
</feature>
<feature type="transmembrane region" description="Helical" evidence="1">
    <location>
        <begin position="263"/>
        <end position="283"/>
    </location>
</feature>
<feature type="transmembrane region" description="Helical" evidence="1">
    <location>
        <begin position="294"/>
        <end position="314"/>
    </location>
</feature>
<feature type="transmembrane region" description="Helical" evidence="1">
    <location>
        <begin position="325"/>
        <end position="345"/>
    </location>
</feature>
<feature type="transmembrane region" description="Helical" evidence="1">
    <location>
        <begin position="354"/>
        <end position="374"/>
    </location>
</feature>
<reference key="1">
    <citation type="journal article" date="1996" name="Science">
        <title>Complete genome sequence of the methanogenic archaeon, Methanococcus jannaschii.</title>
        <authorList>
            <person name="Bult C.J."/>
            <person name="White O."/>
            <person name="Olsen G.J."/>
            <person name="Zhou L."/>
            <person name="Fleischmann R.D."/>
            <person name="Sutton G.G."/>
            <person name="Blake J.A."/>
            <person name="FitzGerald L.M."/>
            <person name="Clayton R.A."/>
            <person name="Gocayne J.D."/>
            <person name="Kerlavage A.R."/>
            <person name="Dougherty B.A."/>
            <person name="Tomb J.-F."/>
            <person name="Adams M.D."/>
            <person name="Reich C.I."/>
            <person name="Overbeek R."/>
            <person name="Kirkness E.F."/>
            <person name="Weinstock K.G."/>
            <person name="Merrick J.M."/>
            <person name="Glodek A."/>
            <person name="Scott J.L."/>
            <person name="Geoghagen N.S.M."/>
            <person name="Weidman J.F."/>
            <person name="Fuhrmann J.L."/>
            <person name="Nguyen D."/>
            <person name="Utterback T.R."/>
            <person name="Kelley J.M."/>
            <person name="Peterson J.D."/>
            <person name="Sadow P.W."/>
            <person name="Hanna M.C."/>
            <person name="Cotton M.D."/>
            <person name="Roberts K.M."/>
            <person name="Hurst M.A."/>
            <person name="Kaine B.P."/>
            <person name="Borodovsky M."/>
            <person name="Klenk H.-P."/>
            <person name="Fraser C.M."/>
            <person name="Smith H.O."/>
            <person name="Woese C.R."/>
            <person name="Venter J.C."/>
        </authorList>
    </citation>
    <scope>NUCLEOTIDE SEQUENCE [LARGE SCALE GENOMIC DNA]</scope>
    <source>
        <strain>ATCC 43067 / DSM 2661 / JAL-1 / JCM 10045 / NBRC 100440</strain>
    </source>
</reference>
<reference key="2">
    <citation type="journal article" date="2002" name="FEBS Lett.">
        <title>Identification of a pH regulated Na(+)/H(+) antiporter of Methanococcus jannaschii.</title>
        <authorList>
            <person name="Hellmer J."/>
            <person name="Paetzold R."/>
            <person name="Zeilinger C."/>
        </authorList>
    </citation>
    <scope>SIMILARITY TO NA(+)/H(+) ANTIPORTERS</scope>
</reference>
<organism>
    <name type="scientific">Methanocaldococcus jannaschii (strain ATCC 43067 / DSM 2661 / JAL-1 / JCM 10045 / NBRC 100440)</name>
    <name type="common">Methanococcus jannaschii</name>
    <dbReference type="NCBI Taxonomy" id="243232"/>
    <lineage>
        <taxon>Archaea</taxon>
        <taxon>Methanobacteriati</taxon>
        <taxon>Methanobacteriota</taxon>
        <taxon>Methanomada group</taxon>
        <taxon>Methanococci</taxon>
        <taxon>Methanococcales</taxon>
        <taxon>Methanocaldococcaceae</taxon>
        <taxon>Methanocaldococcus</taxon>
    </lineage>
</organism>
<protein>
    <recommendedName>
        <fullName>Probable Na(+)/H(+) antiporter 3</fullName>
    </recommendedName>
    <alternativeName>
        <fullName>MjNapA</fullName>
    </alternativeName>
</protein>
<keyword id="KW-0050">Antiport</keyword>
<keyword id="KW-1003">Cell membrane</keyword>
<keyword id="KW-0406">Ion transport</keyword>
<keyword id="KW-0472">Membrane</keyword>
<keyword id="KW-1185">Reference proteome</keyword>
<keyword id="KW-0915">Sodium</keyword>
<keyword id="KW-0739">Sodium transport</keyword>
<keyword id="KW-0812">Transmembrane</keyword>
<keyword id="KW-1133">Transmembrane helix</keyword>
<keyword id="KW-0813">Transport</keyword>